<dbReference type="EMBL" id="AE016826">
    <property type="protein sequence ID" value="AAO27103.1"/>
    <property type="molecule type" value="Genomic_DNA"/>
</dbReference>
<dbReference type="RefSeq" id="WP_011091504.1">
    <property type="nucleotide sequence ID" value="NC_004545.1"/>
</dbReference>
<dbReference type="SMR" id="Q89AC3"/>
<dbReference type="STRING" id="224915.bbp_391"/>
<dbReference type="KEGG" id="bab:bbp_391"/>
<dbReference type="eggNOG" id="COG0354">
    <property type="taxonomic scope" value="Bacteria"/>
</dbReference>
<dbReference type="HOGENOM" id="CLU_007884_6_1_6"/>
<dbReference type="OrthoDB" id="9796287at2"/>
<dbReference type="Proteomes" id="UP000000601">
    <property type="component" value="Chromosome"/>
</dbReference>
<dbReference type="GO" id="GO:0005737">
    <property type="term" value="C:cytoplasm"/>
    <property type="evidence" value="ECO:0007669"/>
    <property type="project" value="UniProtKB-SubCell"/>
</dbReference>
<dbReference type="GO" id="GO:0005542">
    <property type="term" value="F:folic acid binding"/>
    <property type="evidence" value="ECO:0007669"/>
    <property type="project" value="UniProtKB-UniRule"/>
</dbReference>
<dbReference type="GO" id="GO:0016226">
    <property type="term" value="P:iron-sulfur cluster assembly"/>
    <property type="evidence" value="ECO:0007669"/>
    <property type="project" value="TreeGrafter"/>
</dbReference>
<dbReference type="GO" id="GO:0009451">
    <property type="term" value="P:RNA modification"/>
    <property type="evidence" value="ECO:0007669"/>
    <property type="project" value="InterPro"/>
</dbReference>
<dbReference type="GO" id="GO:0008033">
    <property type="term" value="P:tRNA processing"/>
    <property type="evidence" value="ECO:0007669"/>
    <property type="project" value="UniProtKB-UniRule"/>
</dbReference>
<dbReference type="Gene3D" id="2.40.30.160">
    <property type="match status" value="1"/>
</dbReference>
<dbReference type="Gene3D" id="3.30.70.1630">
    <property type="match status" value="1"/>
</dbReference>
<dbReference type="Gene3D" id="3.30.70.1400">
    <property type="entry name" value="Aminomethyltransferase beta-barrel domains"/>
    <property type="match status" value="1"/>
</dbReference>
<dbReference type="HAMAP" id="MF_01175">
    <property type="entry name" value="tRNA_modifying_YgfZ"/>
    <property type="match status" value="1"/>
</dbReference>
<dbReference type="InterPro" id="IPR029043">
    <property type="entry name" value="GcvT/YgfZ_C"/>
</dbReference>
<dbReference type="InterPro" id="IPR023758">
    <property type="entry name" value="tRNA-modifying_YgfZ"/>
</dbReference>
<dbReference type="InterPro" id="IPR045179">
    <property type="entry name" value="YgfZ/GcvT"/>
</dbReference>
<dbReference type="InterPro" id="IPR017703">
    <property type="entry name" value="YgfZ/GcvT_CS"/>
</dbReference>
<dbReference type="InterPro" id="IPR048451">
    <property type="entry name" value="YgfZ_barrel"/>
</dbReference>
<dbReference type="NCBIfam" id="NF007110">
    <property type="entry name" value="PRK09559.1"/>
    <property type="match status" value="1"/>
</dbReference>
<dbReference type="NCBIfam" id="TIGR03317">
    <property type="entry name" value="ygfZ_signature"/>
    <property type="match status" value="1"/>
</dbReference>
<dbReference type="PANTHER" id="PTHR22602">
    <property type="entry name" value="TRANSFERASE CAF17, MITOCHONDRIAL-RELATED"/>
    <property type="match status" value="1"/>
</dbReference>
<dbReference type="PANTHER" id="PTHR22602:SF0">
    <property type="entry name" value="TRANSFERASE CAF17, MITOCHONDRIAL-RELATED"/>
    <property type="match status" value="1"/>
</dbReference>
<dbReference type="Pfam" id="PF21130">
    <property type="entry name" value="YgfZ_barrel"/>
    <property type="match status" value="1"/>
</dbReference>
<dbReference type="SUPFAM" id="SSF101790">
    <property type="entry name" value="Aminomethyltransferase beta-barrel domain"/>
    <property type="match status" value="1"/>
</dbReference>
<dbReference type="SUPFAM" id="SSF103025">
    <property type="entry name" value="Folate-binding domain"/>
    <property type="match status" value="1"/>
</dbReference>
<keyword id="KW-0963">Cytoplasm</keyword>
<keyword id="KW-0290">Folate-binding</keyword>
<keyword id="KW-1185">Reference proteome</keyword>
<keyword id="KW-0819">tRNA processing</keyword>
<proteinExistence type="inferred from homology"/>
<gene>
    <name type="ordered locus">bbp_391</name>
</gene>
<protein>
    <recommendedName>
        <fullName evidence="1">tRNA-modifying protein YgfZ</fullName>
    </recommendedName>
</protein>
<name>YGFZ_BUCBP</name>
<evidence type="ECO:0000255" key="1">
    <source>
        <dbReference type="HAMAP-Rule" id="MF_01175"/>
    </source>
</evidence>
<reference key="1">
    <citation type="journal article" date="2003" name="Proc. Natl. Acad. Sci. U.S.A.">
        <title>Reductive genome evolution in Buchnera aphidicola.</title>
        <authorList>
            <person name="van Ham R.C.H.J."/>
            <person name="Kamerbeek J."/>
            <person name="Palacios C."/>
            <person name="Rausell C."/>
            <person name="Abascal F."/>
            <person name="Bastolla U."/>
            <person name="Fernandez J.M."/>
            <person name="Jimenez L."/>
            <person name="Postigo M."/>
            <person name="Silva F.J."/>
            <person name="Tamames J."/>
            <person name="Viguera E."/>
            <person name="Latorre A."/>
            <person name="Valencia A."/>
            <person name="Moran F."/>
            <person name="Moya A."/>
        </authorList>
    </citation>
    <scope>NUCLEOTIDE SEQUENCE [LARGE SCALE GENOMIC DNA]</scope>
    <source>
        <strain>Bp</strain>
    </source>
</reference>
<feature type="chain" id="PRO_0000216255" description="tRNA-modifying protein YgfZ">
    <location>
        <begin position="1"/>
        <end position="318"/>
    </location>
</feature>
<feature type="binding site" evidence="1">
    <location>
        <position position="24"/>
    </location>
    <ligand>
        <name>folate</name>
        <dbReference type="ChEBI" id="CHEBI:62501"/>
    </ligand>
</feature>
<feature type="binding site" evidence="1">
    <location>
        <position position="185"/>
    </location>
    <ligand>
        <name>folate</name>
        <dbReference type="ChEBI" id="CHEBI:62501"/>
    </ligand>
</feature>
<accession>Q89AC3</accession>
<comment type="function">
    <text evidence="1">Folate-binding protein involved in regulating the level of ATP-DnaA and in the modification of some tRNAs. It is probably a key factor in regulatory networks that act via tRNA modification, such as initiation of chromosomal replication.</text>
</comment>
<comment type="subcellular location">
    <subcellularLocation>
        <location evidence="1">Cytoplasm</location>
    </subcellularLocation>
</comment>
<comment type="similarity">
    <text evidence="1">Belongs to the tRNA-modifying YgfZ family.</text>
</comment>
<organism>
    <name type="scientific">Buchnera aphidicola subsp. Baizongia pistaciae (strain Bp)</name>
    <dbReference type="NCBI Taxonomy" id="224915"/>
    <lineage>
        <taxon>Bacteria</taxon>
        <taxon>Pseudomonadati</taxon>
        <taxon>Pseudomonadota</taxon>
        <taxon>Gammaproteobacteria</taxon>
        <taxon>Enterobacterales</taxon>
        <taxon>Erwiniaceae</taxon>
        <taxon>Buchnera</taxon>
    </lineage>
</organism>
<sequence length="318" mass="37728">MNNELIEYNLHFSKTIKLTFLKDWSFITVTGKDCFNYLQGQITYNLKLLKSNKHIICSHCTIDGKVLSILRLFMHNDGYAYILRKSTSKFQINELKKYSIFSHVNICQKKDIILLGIMGREARTKLLQIFKNIPHERDSVYQENDVIILKYDQPHERYLIIIKKHNLILNKILSLVDKIYHHKIWLALEIASNFPIIDYNINKKFFPQSLNLEKLNGLDLKKGCYYGQEMIAKIHFKKLNKHYLHWLSGYSYPIPKIGDNIEQKKNKNFSSCGWILSVVKLSTTKIWIQAVLKHYNHYKTNVFRIKNKINSFFYITDE</sequence>